<feature type="chain" id="PRO_1000090107" description="Glutamate--tRNA ligase">
    <location>
        <begin position="1"/>
        <end position="469"/>
    </location>
</feature>
<feature type="short sequence motif" description="'HIGH' region" evidence="1">
    <location>
        <begin position="9"/>
        <end position="19"/>
    </location>
</feature>
<feature type="short sequence motif" description="'KMSKS' region" evidence="1">
    <location>
        <begin position="236"/>
        <end position="240"/>
    </location>
</feature>
<feature type="binding site" evidence="1">
    <location>
        <position position="98"/>
    </location>
    <ligand>
        <name>Zn(2+)</name>
        <dbReference type="ChEBI" id="CHEBI:29105"/>
    </ligand>
</feature>
<feature type="binding site" evidence="1">
    <location>
        <position position="100"/>
    </location>
    <ligand>
        <name>Zn(2+)</name>
        <dbReference type="ChEBI" id="CHEBI:29105"/>
    </ligand>
</feature>
<feature type="binding site" evidence="1">
    <location>
        <position position="125"/>
    </location>
    <ligand>
        <name>Zn(2+)</name>
        <dbReference type="ChEBI" id="CHEBI:29105"/>
    </ligand>
</feature>
<feature type="binding site" evidence="1">
    <location>
        <position position="127"/>
    </location>
    <ligand>
        <name>Zn(2+)</name>
        <dbReference type="ChEBI" id="CHEBI:29105"/>
    </ligand>
</feature>
<feature type="binding site" evidence="1">
    <location>
        <position position="239"/>
    </location>
    <ligand>
        <name>ATP</name>
        <dbReference type="ChEBI" id="CHEBI:30616"/>
    </ligand>
</feature>
<proteinExistence type="inferred from homology"/>
<comment type="function">
    <text evidence="1">Catalyzes the attachment of glutamate to tRNA(Glu) in a two-step reaction: glutamate is first activated by ATP to form Glu-AMP and then transferred to the acceptor end of tRNA(Glu).</text>
</comment>
<comment type="catalytic activity">
    <reaction evidence="1">
        <text>tRNA(Glu) + L-glutamate + ATP = L-glutamyl-tRNA(Glu) + AMP + diphosphate</text>
        <dbReference type="Rhea" id="RHEA:23540"/>
        <dbReference type="Rhea" id="RHEA-COMP:9663"/>
        <dbReference type="Rhea" id="RHEA-COMP:9680"/>
        <dbReference type="ChEBI" id="CHEBI:29985"/>
        <dbReference type="ChEBI" id="CHEBI:30616"/>
        <dbReference type="ChEBI" id="CHEBI:33019"/>
        <dbReference type="ChEBI" id="CHEBI:78442"/>
        <dbReference type="ChEBI" id="CHEBI:78520"/>
        <dbReference type="ChEBI" id="CHEBI:456215"/>
        <dbReference type="EC" id="6.1.1.17"/>
    </reaction>
</comment>
<comment type="cofactor">
    <cofactor evidence="1">
        <name>Zn(2+)</name>
        <dbReference type="ChEBI" id="CHEBI:29105"/>
    </cofactor>
    <text evidence="1">Binds 1 zinc ion per subunit.</text>
</comment>
<comment type="subunit">
    <text evidence="1">Monomer.</text>
</comment>
<comment type="subcellular location">
    <subcellularLocation>
        <location evidence="1">Cytoplasm</location>
    </subcellularLocation>
</comment>
<comment type="similarity">
    <text evidence="1">Belongs to the class-I aminoacyl-tRNA synthetase family. Glutamate--tRNA ligase type 1 subfamily.</text>
</comment>
<protein>
    <recommendedName>
        <fullName evidence="1">Glutamate--tRNA ligase</fullName>
        <ecNumber evidence="1">6.1.1.17</ecNumber>
    </recommendedName>
    <alternativeName>
        <fullName evidence="1">Glutamyl-tRNA synthetase</fullName>
        <shortName evidence="1">GluRS</shortName>
    </alternativeName>
</protein>
<reference key="1">
    <citation type="submission" date="2008-02" db="EMBL/GenBank/DDBJ databases">
        <title>Complete sequence of Shewanella woodyi ATCC 51908.</title>
        <authorList>
            <consortium name="US DOE Joint Genome Institute"/>
            <person name="Copeland A."/>
            <person name="Lucas S."/>
            <person name="Lapidus A."/>
            <person name="Glavina del Rio T."/>
            <person name="Dalin E."/>
            <person name="Tice H."/>
            <person name="Bruce D."/>
            <person name="Goodwin L."/>
            <person name="Pitluck S."/>
            <person name="Sims D."/>
            <person name="Brettin T."/>
            <person name="Detter J.C."/>
            <person name="Han C."/>
            <person name="Kuske C.R."/>
            <person name="Schmutz J."/>
            <person name="Larimer F."/>
            <person name="Land M."/>
            <person name="Hauser L."/>
            <person name="Kyrpides N."/>
            <person name="Lykidis A."/>
            <person name="Zhao J.-S."/>
            <person name="Richardson P."/>
        </authorList>
    </citation>
    <scope>NUCLEOTIDE SEQUENCE [LARGE SCALE GENOMIC DNA]</scope>
    <source>
        <strain>ATCC 51908 / MS32</strain>
    </source>
</reference>
<dbReference type="EC" id="6.1.1.17" evidence="1"/>
<dbReference type="EMBL" id="CP000961">
    <property type="protein sequence ID" value="ACA86013.1"/>
    <property type="molecule type" value="Genomic_DNA"/>
</dbReference>
<dbReference type="RefSeq" id="WP_012324359.1">
    <property type="nucleotide sequence ID" value="NC_010506.1"/>
</dbReference>
<dbReference type="SMR" id="B1KML5"/>
<dbReference type="STRING" id="392500.Swoo_1728"/>
<dbReference type="KEGG" id="swd:Swoo_1728"/>
<dbReference type="eggNOG" id="COG0008">
    <property type="taxonomic scope" value="Bacteria"/>
</dbReference>
<dbReference type="HOGENOM" id="CLU_015768_6_0_6"/>
<dbReference type="Proteomes" id="UP000002168">
    <property type="component" value="Chromosome"/>
</dbReference>
<dbReference type="GO" id="GO:0005829">
    <property type="term" value="C:cytosol"/>
    <property type="evidence" value="ECO:0007669"/>
    <property type="project" value="TreeGrafter"/>
</dbReference>
<dbReference type="GO" id="GO:0005524">
    <property type="term" value="F:ATP binding"/>
    <property type="evidence" value="ECO:0007669"/>
    <property type="project" value="UniProtKB-UniRule"/>
</dbReference>
<dbReference type="GO" id="GO:0004818">
    <property type="term" value="F:glutamate-tRNA ligase activity"/>
    <property type="evidence" value="ECO:0007669"/>
    <property type="project" value="UniProtKB-UniRule"/>
</dbReference>
<dbReference type="GO" id="GO:0000049">
    <property type="term" value="F:tRNA binding"/>
    <property type="evidence" value="ECO:0007669"/>
    <property type="project" value="InterPro"/>
</dbReference>
<dbReference type="GO" id="GO:0008270">
    <property type="term" value="F:zinc ion binding"/>
    <property type="evidence" value="ECO:0007669"/>
    <property type="project" value="UniProtKB-UniRule"/>
</dbReference>
<dbReference type="GO" id="GO:0006424">
    <property type="term" value="P:glutamyl-tRNA aminoacylation"/>
    <property type="evidence" value="ECO:0007669"/>
    <property type="project" value="UniProtKB-UniRule"/>
</dbReference>
<dbReference type="CDD" id="cd00808">
    <property type="entry name" value="GluRS_core"/>
    <property type="match status" value="1"/>
</dbReference>
<dbReference type="FunFam" id="3.40.50.620:FF:000007">
    <property type="entry name" value="Glutamate--tRNA ligase"/>
    <property type="match status" value="1"/>
</dbReference>
<dbReference type="Gene3D" id="1.10.10.350">
    <property type="match status" value="1"/>
</dbReference>
<dbReference type="Gene3D" id="3.40.50.620">
    <property type="entry name" value="HUPs"/>
    <property type="match status" value="1"/>
</dbReference>
<dbReference type="HAMAP" id="MF_00022">
    <property type="entry name" value="Glu_tRNA_synth_type1"/>
    <property type="match status" value="1"/>
</dbReference>
<dbReference type="InterPro" id="IPR045462">
    <property type="entry name" value="aa-tRNA-synth_I_cd-bd"/>
</dbReference>
<dbReference type="InterPro" id="IPR020751">
    <property type="entry name" value="aa-tRNA-synth_I_codon-bd_sub2"/>
</dbReference>
<dbReference type="InterPro" id="IPR001412">
    <property type="entry name" value="aa-tRNA-synth_I_CS"/>
</dbReference>
<dbReference type="InterPro" id="IPR008925">
    <property type="entry name" value="aa_tRNA-synth_I_cd-bd_sf"/>
</dbReference>
<dbReference type="InterPro" id="IPR004527">
    <property type="entry name" value="Glu-tRNA-ligase_bac/mito"/>
</dbReference>
<dbReference type="InterPro" id="IPR000924">
    <property type="entry name" value="Glu/Gln-tRNA-synth"/>
</dbReference>
<dbReference type="InterPro" id="IPR020058">
    <property type="entry name" value="Glu/Gln-tRNA-synth_Ib_cat-dom"/>
</dbReference>
<dbReference type="InterPro" id="IPR049940">
    <property type="entry name" value="GluQ/Sye"/>
</dbReference>
<dbReference type="InterPro" id="IPR033910">
    <property type="entry name" value="GluRS_core"/>
</dbReference>
<dbReference type="InterPro" id="IPR014729">
    <property type="entry name" value="Rossmann-like_a/b/a_fold"/>
</dbReference>
<dbReference type="NCBIfam" id="TIGR00464">
    <property type="entry name" value="gltX_bact"/>
    <property type="match status" value="1"/>
</dbReference>
<dbReference type="PANTHER" id="PTHR43311">
    <property type="entry name" value="GLUTAMATE--TRNA LIGASE"/>
    <property type="match status" value="1"/>
</dbReference>
<dbReference type="PANTHER" id="PTHR43311:SF2">
    <property type="entry name" value="GLUTAMATE--TRNA LIGASE, MITOCHONDRIAL-RELATED"/>
    <property type="match status" value="1"/>
</dbReference>
<dbReference type="Pfam" id="PF19269">
    <property type="entry name" value="Anticodon_2"/>
    <property type="match status" value="1"/>
</dbReference>
<dbReference type="Pfam" id="PF00749">
    <property type="entry name" value="tRNA-synt_1c"/>
    <property type="match status" value="1"/>
</dbReference>
<dbReference type="PRINTS" id="PR00987">
    <property type="entry name" value="TRNASYNTHGLU"/>
</dbReference>
<dbReference type="SUPFAM" id="SSF48163">
    <property type="entry name" value="An anticodon-binding domain of class I aminoacyl-tRNA synthetases"/>
    <property type="match status" value="1"/>
</dbReference>
<dbReference type="SUPFAM" id="SSF52374">
    <property type="entry name" value="Nucleotidylyl transferase"/>
    <property type="match status" value="1"/>
</dbReference>
<dbReference type="PROSITE" id="PS00178">
    <property type="entry name" value="AA_TRNA_LIGASE_I"/>
    <property type="match status" value="1"/>
</dbReference>
<name>SYE_SHEWM</name>
<gene>
    <name evidence="1" type="primary">gltX</name>
    <name type="ordered locus">Swoo_1728</name>
</gene>
<sequence>MTVKTRFAPSPTGFLHVGGARTALYSWLYARANQGEFVLRIEDTDLERSTPEACAAILEGMEWLNLNWDEGPYYQTKRFDRYNEIIVQMLEQGTAYKCYCSRERIDTMREEQAAKGEQQKYDGCCRDKAPRDTDEPFVVRFKNPTEGSVVFDDHVRGHIEFANSTLDDLIIARTEGTPTYNFCVVVDDWDMGITCVVRGEDHINNTPRQINILKALGAPVPEYAHVSMILGDDGAKLSKRHGAVGVMQYRDDGYLPEALLNYLVRLGWSHGDQEVFSIDEMKQFFSLDDINKAASAFNTDKLIWLNQHYIKELDPEYVASHLEWHMADQNIDTSNGPKLSEVVSALSERAKTLKELAASSRYFFEDFAEFDETAAKKHLRGVALEPLTLFQSKLAGLNEWTLEAIHQAIEDTAAELEVGMGKVGMPLRVAVTGAGMSPAVDLTIFLVGKVRAEQRISKAIEFVANRINS</sequence>
<organism>
    <name type="scientific">Shewanella woodyi (strain ATCC 51908 / MS32)</name>
    <dbReference type="NCBI Taxonomy" id="392500"/>
    <lineage>
        <taxon>Bacteria</taxon>
        <taxon>Pseudomonadati</taxon>
        <taxon>Pseudomonadota</taxon>
        <taxon>Gammaproteobacteria</taxon>
        <taxon>Alteromonadales</taxon>
        <taxon>Shewanellaceae</taxon>
        <taxon>Shewanella</taxon>
    </lineage>
</organism>
<accession>B1KML5</accession>
<evidence type="ECO:0000255" key="1">
    <source>
        <dbReference type="HAMAP-Rule" id="MF_00022"/>
    </source>
</evidence>
<keyword id="KW-0030">Aminoacyl-tRNA synthetase</keyword>
<keyword id="KW-0067">ATP-binding</keyword>
<keyword id="KW-0963">Cytoplasm</keyword>
<keyword id="KW-0436">Ligase</keyword>
<keyword id="KW-0479">Metal-binding</keyword>
<keyword id="KW-0547">Nucleotide-binding</keyword>
<keyword id="KW-0648">Protein biosynthesis</keyword>
<keyword id="KW-1185">Reference proteome</keyword>
<keyword id="KW-0862">Zinc</keyword>